<dbReference type="EC" id="1.3.5.2" evidence="1"/>
<dbReference type="EMBL" id="CP000393">
    <property type="protein sequence ID" value="ABG51255.1"/>
    <property type="molecule type" value="Genomic_DNA"/>
</dbReference>
<dbReference type="RefSeq" id="WP_011611628.1">
    <property type="nucleotide sequence ID" value="NC_008312.1"/>
</dbReference>
<dbReference type="SMR" id="Q113R9"/>
<dbReference type="STRING" id="203124.Tery_2007"/>
<dbReference type="KEGG" id="ter:Tery_2007"/>
<dbReference type="eggNOG" id="COG0167">
    <property type="taxonomic scope" value="Bacteria"/>
</dbReference>
<dbReference type="HOGENOM" id="CLU_013640_2_0_3"/>
<dbReference type="OrthoDB" id="9802377at2"/>
<dbReference type="UniPathway" id="UPA00070">
    <property type="reaction ID" value="UER00946"/>
</dbReference>
<dbReference type="GO" id="GO:0005737">
    <property type="term" value="C:cytoplasm"/>
    <property type="evidence" value="ECO:0007669"/>
    <property type="project" value="InterPro"/>
</dbReference>
<dbReference type="GO" id="GO:0005886">
    <property type="term" value="C:plasma membrane"/>
    <property type="evidence" value="ECO:0007669"/>
    <property type="project" value="UniProtKB-SubCell"/>
</dbReference>
<dbReference type="GO" id="GO:0106430">
    <property type="term" value="F:dihydroorotate dehydrogenase (quinone) activity"/>
    <property type="evidence" value="ECO:0007669"/>
    <property type="project" value="UniProtKB-EC"/>
</dbReference>
<dbReference type="GO" id="GO:0006207">
    <property type="term" value="P:'de novo' pyrimidine nucleobase biosynthetic process"/>
    <property type="evidence" value="ECO:0007669"/>
    <property type="project" value="InterPro"/>
</dbReference>
<dbReference type="GO" id="GO:0044205">
    <property type="term" value="P:'de novo' UMP biosynthetic process"/>
    <property type="evidence" value="ECO:0007669"/>
    <property type="project" value="UniProtKB-UniRule"/>
</dbReference>
<dbReference type="CDD" id="cd04738">
    <property type="entry name" value="DHOD_2_like"/>
    <property type="match status" value="1"/>
</dbReference>
<dbReference type="Gene3D" id="3.20.20.70">
    <property type="entry name" value="Aldolase class I"/>
    <property type="match status" value="1"/>
</dbReference>
<dbReference type="HAMAP" id="MF_00225">
    <property type="entry name" value="DHO_dh_type2"/>
    <property type="match status" value="1"/>
</dbReference>
<dbReference type="InterPro" id="IPR013785">
    <property type="entry name" value="Aldolase_TIM"/>
</dbReference>
<dbReference type="InterPro" id="IPR050074">
    <property type="entry name" value="DHO_dehydrogenase"/>
</dbReference>
<dbReference type="InterPro" id="IPR005719">
    <property type="entry name" value="Dihydroorotate_DH_2"/>
</dbReference>
<dbReference type="InterPro" id="IPR005720">
    <property type="entry name" value="Dihydroorotate_DH_cat"/>
</dbReference>
<dbReference type="InterPro" id="IPR001295">
    <property type="entry name" value="Dihydroorotate_DH_CS"/>
</dbReference>
<dbReference type="NCBIfam" id="NF003651">
    <property type="entry name" value="PRK05286.2-4"/>
    <property type="match status" value="1"/>
</dbReference>
<dbReference type="NCBIfam" id="NF003652">
    <property type="entry name" value="PRK05286.2-5"/>
    <property type="match status" value="1"/>
</dbReference>
<dbReference type="NCBIfam" id="TIGR01036">
    <property type="entry name" value="pyrD_sub2"/>
    <property type="match status" value="1"/>
</dbReference>
<dbReference type="PANTHER" id="PTHR48109:SF4">
    <property type="entry name" value="DIHYDROOROTATE DEHYDROGENASE (QUINONE), MITOCHONDRIAL"/>
    <property type="match status" value="1"/>
</dbReference>
<dbReference type="PANTHER" id="PTHR48109">
    <property type="entry name" value="DIHYDROOROTATE DEHYDROGENASE (QUINONE), MITOCHONDRIAL-RELATED"/>
    <property type="match status" value="1"/>
</dbReference>
<dbReference type="Pfam" id="PF01180">
    <property type="entry name" value="DHO_dh"/>
    <property type="match status" value="1"/>
</dbReference>
<dbReference type="SUPFAM" id="SSF51395">
    <property type="entry name" value="FMN-linked oxidoreductases"/>
    <property type="match status" value="1"/>
</dbReference>
<dbReference type="PROSITE" id="PS00911">
    <property type="entry name" value="DHODEHASE_1"/>
    <property type="match status" value="1"/>
</dbReference>
<dbReference type="PROSITE" id="PS00912">
    <property type="entry name" value="DHODEHASE_2"/>
    <property type="match status" value="1"/>
</dbReference>
<sequence length="378" mass="41911">MLNIYRSVLFPIIFSGLKADPEWAHHQVLNMLSFIDTHSDSQLVNSIRTTMEKLFCFKDTRLEQNLWELNFKNPVGLAPGYDKDGQAINMWPQLGFGFAELGTVTFHQQPGNAQPRLFRLPKDKAVLNRMGFNNKGAAALAKKFQIQNKKNSFFFPYGVNIGKSKITPLEAAATDYLESFRLLKNCGDYFVVNVSSPNTPGLRSLQNTDSLSKILEVLPRENERKKPILVKIAPDLENEAIAAIIDLIKEYKISGIIATNTTINREKLTTKILPATGKPIIEEAGGISGKPLTKRSTEIIKFIWQETKGKLPIIGVGGIFTSEDAWNKITAGASLIQIYTGLVYQGPGIVKQILQGLLKKLDEHGLNSISEAVGLANK</sequence>
<feature type="chain" id="PRO_0000336496" description="Dihydroorotate dehydrogenase (quinone)">
    <location>
        <begin position="1"/>
        <end position="378"/>
    </location>
</feature>
<feature type="active site" description="Nucleophile" evidence="1">
    <location>
        <position position="196"/>
    </location>
</feature>
<feature type="binding site" evidence="1">
    <location>
        <begin position="79"/>
        <end position="83"/>
    </location>
    <ligand>
        <name>FMN</name>
        <dbReference type="ChEBI" id="CHEBI:58210"/>
    </ligand>
</feature>
<feature type="binding site" evidence="1">
    <location>
        <position position="83"/>
    </location>
    <ligand>
        <name>substrate</name>
    </ligand>
</feature>
<feature type="binding site" evidence="1">
    <location>
        <position position="103"/>
    </location>
    <ligand>
        <name>FMN</name>
        <dbReference type="ChEBI" id="CHEBI:58210"/>
    </ligand>
</feature>
<feature type="binding site" evidence="1">
    <location>
        <begin position="128"/>
        <end position="132"/>
    </location>
    <ligand>
        <name>substrate</name>
    </ligand>
</feature>
<feature type="binding site" evidence="1">
    <location>
        <position position="160"/>
    </location>
    <ligand>
        <name>FMN</name>
        <dbReference type="ChEBI" id="CHEBI:58210"/>
    </ligand>
</feature>
<feature type="binding site" evidence="1">
    <location>
        <position position="193"/>
    </location>
    <ligand>
        <name>FMN</name>
        <dbReference type="ChEBI" id="CHEBI:58210"/>
    </ligand>
</feature>
<feature type="binding site" evidence="1">
    <location>
        <position position="193"/>
    </location>
    <ligand>
        <name>substrate</name>
    </ligand>
</feature>
<feature type="binding site" evidence="1">
    <location>
        <position position="198"/>
    </location>
    <ligand>
        <name>substrate</name>
    </ligand>
</feature>
<feature type="binding site" evidence="1">
    <location>
        <position position="231"/>
    </location>
    <ligand>
        <name>FMN</name>
        <dbReference type="ChEBI" id="CHEBI:58210"/>
    </ligand>
</feature>
<feature type="binding site" evidence="1">
    <location>
        <position position="259"/>
    </location>
    <ligand>
        <name>FMN</name>
        <dbReference type="ChEBI" id="CHEBI:58210"/>
    </ligand>
</feature>
<feature type="binding site" evidence="1">
    <location>
        <begin position="260"/>
        <end position="261"/>
    </location>
    <ligand>
        <name>substrate</name>
    </ligand>
</feature>
<feature type="binding site" evidence="1">
    <location>
        <position position="289"/>
    </location>
    <ligand>
        <name>FMN</name>
        <dbReference type="ChEBI" id="CHEBI:58210"/>
    </ligand>
</feature>
<feature type="binding site" evidence="1">
    <location>
        <position position="318"/>
    </location>
    <ligand>
        <name>FMN</name>
        <dbReference type="ChEBI" id="CHEBI:58210"/>
    </ligand>
</feature>
<feature type="binding site" evidence="1">
    <location>
        <begin position="339"/>
        <end position="340"/>
    </location>
    <ligand>
        <name>FMN</name>
        <dbReference type="ChEBI" id="CHEBI:58210"/>
    </ligand>
</feature>
<name>PYRD_TRIEI</name>
<protein>
    <recommendedName>
        <fullName evidence="1">Dihydroorotate dehydrogenase (quinone)</fullName>
        <ecNumber evidence="1">1.3.5.2</ecNumber>
    </recommendedName>
    <alternativeName>
        <fullName evidence="1">DHOdehase</fullName>
        <shortName evidence="1">DHOD</shortName>
        <shortName evidence="1">DHODase</shortName>
    </alternativeName>
    <alternativeName>
        <fullName evidence="1">Dihydroorotate oxidase</fullName>
    </alternativeName>
</protein>
<comment type="function">
    <text evidence="1">Catalyzes the conversion of dihydroorotate to orotate with quinone as electron acceptor.</text>
</comment>
<comment type="catalytic activity">
    <reaction evidence="1">
        <text>(S)-dihydroorotate + a quinone = orotate + a quinol</text>
        <dbReference type="Rhea" id="RHEA:30187"/>
        <dbReference type="ChEBI" id="CHEBI:24646"/>
        <dbReference type="ChEBI" id="CHEBI:30839"/>
        <dbReference type="ChEBI" id="CHEBI:30864"/>
        <dbReference type="ChEBI" id="CHEBI:132124"/>
        <dbReference type="EC" id="1.3.5.2"/>
    </reaction>
</comment>
<comment type="cofactor">
    <cofactor evidence="1">
        <name>FMN</name>
        <dbReference type="ChEBI" id="CHEBI:58210"/>
    </cofactor>
    <text evidence="1">Binds 1 FMN per subunit.</text>
</comment>
<comment type="pathway">
    <text evidence="1">Pyrimidine metabolism; UMP biosynthesis via de novo pathway; orotate from (S)-dihydroorotate (quinone route): step 1/1.</text>
</comment>
<comment type="subunit">
    <text evidence="1">Monomer.</text>
</comment>
<comment type="subcellular location">
    <subcellularLocation>
        <location evidence="1">Cell membrane</location>
        <topology evidence="1">Peripheral membrane protein</topology>
    </subcellularLocation>
</comment>
<comment type="similarity">
    <text evidence="1">Belongs to the dihydroorotate dehydrogenase family. Type 2 subfamily.</text>
</comment>
<gene>
    <name evidence="1" type="primary">pyrD</name>
    <name type="ordered locus">Tery_2007</name>
</gene>
<proteinExistence type="inferred from homology"/>
<keyword id="KW-1003">Cell membrane</keyword>
<keyword id="KW-0285">Flavoprotein</keyword>
<keyword id="KW-0288">FMN</keyword>
<keyword id="KW-0472">Membrane</keyword>
<keyword id="KW-0560">Oxidoreductase</keyword>
<keyword id="KW-0665">Pyrimidine biosynthesis</keyword>
<organism>
    <name type="scientific">Trichodesmium erythraeum (strain IMS101)</name>
    <dbReference type="NCBI Taxonomy" id="203124"/>
    <lineage>
        <taxon>Bacteria</taxon>
        <taxon>Bacillati</taxon>
        <taxon>Cyanobacteriota</taxon>
        <taxon>Cyanophyceae</taxon>
        <taxon>Oscillatoriophycideae</taxon>
        <taxon>Oscillatoriales</taxon>
        <taxon>Microcoleaceae</taxon>
        <taxon>Trichodesmium</taxon>
    </lineage>
</organism>
<accession>Q113R9</accession>
<evidence type="ECO:0000255" key="1">
    <source>
        <dbReference type="HAMAP-Rule" id="MF_00225"/>
    </source>
</evidence>
<reference key="1">
    <citation type="journal article" date="2015" name="Proc. Natl. Acad. Sci. U.S.A.">
        <title>Trichodesmium genome maintains abundant, widespread noncoding DNA in situ, despite oligotrophic lifestyle.</title>
        <authorList>
            <person name="Walworth N."/>
            <person name="Pfreundt U."/>
            <person name="Nelson W.C."/>
            <person name="Mincer T."/>
            <person name="Heidelberg J.F."/>
            <person name="Fu F."/>
            <person name="Waterbury J.B."/>
            <person name="Glavina del Rio T."/>
            <person name="Goodwin L."/>
            <person name="Kyrpides N.C."/>
            <person name="Land M.L."/>
            <person name="Woyke T."/>
            <person name="Hutchins D.A."/>
            <person name="Hess W.R."/>
            <person name="Webb E.A."/>
        </authorList>
    </citation>
    <scope>NUCLEOTIDE SEQUENCE [LARGE SCALE GENOMIC DNA]</scope>
    <source>
        <strain>IMS101</strain>
    </source>
</reference>